<organism>
    <name type="scientific">Nostoc punctiforme (strain ATCC 29133 / PCC 73102)</name>
    <dbReference type="NCBI Taxonomy" id="63737"/>
    <lineage>
        <taxon>Bacteria</taxon>
        <taxon>Bacillati</taxon>
        <taxon>Cyanobacteriota</taxon>
        <taxon>Cyanophyceae</taxon>
        <taxon>Nostocales</taxon>
        <taxon>Nostocaceae</taxon>
        <taxon>Nostoc</taxon>
    </lineage>
</organism>
<accession>B2J0M4</accession>
<feature type="chain" id="PRO_1000092420" description="Elongation factor 4">
    <location>
        <begin position="1"/>
        <end position="603"/>
    </location>
</feature>
<feature type="domain" description="tr-type G">
    <location>
        <begin position="7"/>
        <end position="189"/>
    </location>
</feature>
<feature type="binding site" evidence="1">
    <location>
        <begin position="19"/>
        <end position="24"/>
    </location>
    <ligand>
        <name>GTP</name>
        <dbReference type="ChEBI" id="CHEBI:37565"/>
    </ligand>
</feature>
<feature type="binding site" evidence="1">
    <location>
        <begin position="136"/>
        <end position="139"/>
    </location>
    <ligand>
        <name>GTP</name>
        <dbReference type="ChEBI" id="CHEBI:37565"/>
    </ligand>
</feature>
<keyword id="KW-0997">Cell inner membrane</keyword>
<keyword id="KW-1003">Cell membrane</keyword>
<keyword id="KW-0342">GTP-binding</keyword>
<keyword id="KW-0378">Hydrolase</keyword>
<keyword id="KW-0472">Membrane</keyword>
<keyword id="KW-0547">Nucleotide-binding</keyword>
<keyword id="KW-0648">Protein biosynthesis</keyword>
<keyword id="KW-1185">Reference proteome</keyword>
<name>LEPA_NOSP7</name>
<proteinExistence type="inferred from homology"/>
<protein>
    <recommendedName>
        <fullName evidence="1">Elongation factor 4</fullName>
        <shortName evidence="1">EF-4</shortName>
        <ecNumber evidence="1">3.6.5.n1</ecNumber>
    </recommendedName>
    <alternativeName>
        <fullName evidence="1">Ribosomal back-translocase LepA</fullName>
    </alternativeName>
</protein>
<comment type="function">
    <text evidence="1">Required for accurate and efficient protein synthesis under certain stress conditions. May act as a fidelity factor of the translation reaction, by catalyzing a one-codon backward translocation of tRNAs on improperly translocated ribosomes. Back-translocation proceeds from a post-translocation (POST) complex to a pre-translocation (PRE) complex, thus giving elongation factor G a second chance to translocate the tRNAs correctly. Binds to ribosomes in a GTP-dependent manner.</text>
</comment>
<comment type="catalytic activity">
    <reaction evidence="1">
        <text>GTP + H2O = GDP + phosphate + H(+)</text>
        <dbReference type="Rhea" id="RHEA:19669"/>
        <dbReference type="ChEBI" id="CHEBI:15377"/>
        <dbReference type="ChEBI" id="CHEBI:15378"/>
        <dbReference type="ChEBI" id="CHEBI:37565"/>
        <dbReference type="ChEBI" id="CHEBI:43474"/>
        <dbReference type="ChEBI" id="CHEBI:58189"/>
        <dbReference type="EC" id="3.6.5.n1"/>
    </reaction>
</comment>
<comment type="subcellular location">
    <subcellularLocation>
        <location evidence="1">Cell inner membrane</location>
        <topology evidence="1">Peripheral membrane protein</topology>
        <orientation evidence="1">Cytoplasmic side</orientation>
    </subcellularLocation>
</comment>
<comment type="similarity">
    <text evidence="1">Belongs to the TRAFAC class translation factor GTPase superfamily. Classic translation factor GTPase family. LepA subfamily.</text>
</comment>
<dbReference type="EC" id="3.6.5.n1" evidence="1"/>
<dbReference type="EMBL" id="CP001037">
    <property type="protein sequence ID" value="ACC80241.1"/>
    <property type="molecule type" value="Genomic_DNA"/>
</dbReference>
<dbReference type="RefSeq" id="WP_012408259.1">
    <property type="nucleotide sequence ID" value="NC_010628.1"/>
</dbReference>
<dbReference type="SMR" id="B2J0M4"/>
<dbReference type="STRING" id="63737.Npun_F1552"/>
<dbReference type="EnsemblBacteria" id="ACC80241">
    <property type="protein sequence ID" value="ACC80241"/>
    <property type="gene ID" value="Npun_F1552"/>
</dbReference>
<dbReference type="KEGG" id="npu:Npun_F1552"/>
<dbReference type="eggNOG" id="COG0481">
    <property type="taxonomic scope" value="Bacteria"/>
</dbReference>
<dbReference type="HOGENOM" id="CLU_009995_3_3_3"/>
<dbReference type="OrthoDB" id="580826at2"/>
<dbReference type="PhylomeDB" id="B2J0M4"/>
<dbReference type="Proteomes" id="UP000001191">
    <property type="component" value="Chromosome"/>
</dbReference>
<dbReference type="GO" id="GO:0005886">
    <property type="term" value="C:plasma membrane"/>
    <property type="evidence" value="ECO:0007669"/>
    <property type="project" value="UniProtKB-SubCell"/>
</dbReference>
<dbReference type="GO" id="GO:0005525">
    <property type="term" value="F:GTP binding"/>
    <property type="evidence" value="ECO:0007669"/>
    <property type="project" value="UniProtKB-KW"/>
</dbReference>
<dbReference type="GO" id="GO:0003924">
    <property type="term" value="F:GTPase activity"/>
    <property type="evidence" value="ECO:0007669"/>
    <property type="project" value="InterPro"/>
</dbReference>
<dbReference type="GO" id="GO:0043022">
    <property type="term" value="F:ribosome binding"/>
    <property type="evidence" value="ECO:0007669"/>
    <property type="project" value="TreeGrafter"/>
</dbReference>
<dbReference type="GO" id="GO:0045727">
    <property type="term" value="P:positive regulation of translation"/>
    <property type="evidence" value="ECO:0007669"/>
    <property type="project" value="TreeGrafter"/>
</dbReference>
<dbReference type="GO" id="GO:0006412">
    <property type="term" value="P:translation"/>
    <property type="evidence" value="ECO:0007669"/>
    <property type="project" value="UniProtKB-KW"/>
</dbReference>
<dbReference type="CDD" id="cd03699">
    <property type="entry name" value="EF4_II"/>
    <property type="match status" value="1"/>
</dbReference>
<dbReference type="CDD" id="cd16260">
    <property type="entry name" value="EF4_III"/>
    <property type="match status" value="1"/>
</dbReference>
<dbReference type="CDD" id="cd01890">
    <property type="entry name" value="LepA"/>
    <property type="match status" value="1"/>
</dbReference>
<dbReference type="CDD" id="cd03709">
    <property type="entry name" value="lepA_C"/>
    <property type="match status" value="1"/>
</dbReference>
<dbReference type="FunFam" id="3.40.50.300:FF:000078">
    <property type="entry name" value="Elongation factor 4"/>
    <property type="match status" value="1"/>
</dbReference>
<dbReference type="FunFam" id="2.40.30.10:FF:000015">
    <property type="entry name" value="Translation factor GUF1, mitochondrial"/>
    <property type="match status" value="1"/>
</dbReference>
<dbReference type="FunFam" id="3.30.70.240:FF:000007">
    <property type="entry name" value="Translation factor GUF1, mitochondrial"/>
    <property type="match status" value="1"/>
</dbReference>
<dbReference type="FunFam" id="3.30.70.2570:FF:000001">
    <property type="entry name" value="Translation factor GUF1, mitochondrial"/>
    <property type="match status" value="1"/>
</dbReference>
<dbReference type="FunFam" id="3.30.70.870:FF:000004">
    <property type="entry name" value="Translation factor GUF1, mitochondrial"/>
    <property type="match status" value="1"/>
</dbReference>
<dbReference type="Gene3D" id="3.30.70.240">
    <property type="match status" value="1"/>
</dbReference>
<dbReference type="Gene3D" id="3.30.70.2570">
    <property type="entry name" value="Elongation factor 4, C-terminal domain"/>
    <property type="match status" value="1"/>
</dbReference>
<dbReference type="Gene3D" id="3.30.70.870">
    <property type="entry name" value="Elongation Factor G (Translational Gtpase), domain 3"/>
    <property type="match status" value="1"/>
</dbReference>
<dbReference type="Gene3D" id="3.40.50.300">
    <property type="entry name" value="P-loop containing nucleotide triphosphate hydrolases"/>
    <property type="match status" value="1"/>
</dbReference>
<dbReference type="Gene3D" id="2.40.30.10">
    <property type="entry name" value="Translation factors"/>
    <property type="match status" value="1"/>
</dbReference>
<dbReference type="HAMAP" id="MF_03138">
    <property type="entry name" value="GUFP"/>
    <property type="match status" value="1"/>
</dbReference>
<dbReference type="HAMAP" id="MF_00071">
    <property type="entry name" value="LepA"/>
    <property type="match status" value="1"/>
</dbReference>
<dbReference type="InterPro" id="IPR006297">
    <property type="entry name" value="EF-4"/>
</dbReference>
<dbReference type="InterPro" id="IPR035647">
    <property type="entry name" value="EFG_III/V"/>
</dbReference>
<dbReference type="InterPro" id="IPR000640">
    <property type="entry name" value="EFG_V-like"/>
</dbReference>
<dbReference type="InterPro" id="IPR004161">
    <property type="entry name" value="EFTu-like_2"/>
</dbReference>
<dbReference type="InterPro" id="IPR031157">
    <property type="entry name" value="G_TR_CS"/>
</dbReference>
<dbReference type="InterPro" id="IPR027518">
    <property type="entry name" value="GUFP"/>
</dbReference>
<dbReference type="InterPro" id="IPR038363">
    <property type="entry name" value="LepA_C_sf"/>
</dbReference>
<dbReference type="InterPro" id="IPR013842">
    <property type="entry name" value="LepA_CTD"/>
</dbReference>
<dbReference type="InterPro" id="IPR035654">
    <property type="entry name" value="LepA_IV"/>
</dbReference>
<dbReference type="InterPro" id="IPR027417">
    <property type="entry name" value="P-loop_NTPase"/>
</dbReference>
<dbReference type="InterPro" id="IPR005225">
    <property type="entry name" value="Small_GTP-bd"/>
</dbReference>
<dbReference type="InterPro" id="IPR000795">
    <property type="entry name" value="T_Tr_GTP-bd_dom"/>
</dbReference>
<dbReference type="NCBIfam" id="TIGR01393">
    <property type="entry name" value="lepA"/>
    <property type="match status" value="1"/>
</dbReference>
<dbReference type="NCBIfam" id="TIGR00231">
    <property type="entry name" value="small_GTP"/>
    <property type="match status" value="1"/>
</dbReference>
<dbReference type="PANTHER" id="PTHR43512:SF4">
    <property type="entry name" value="TRANSLATION FACTOR GUF1 HOMOLOG, CHLOROPLASTIC"/>
    <property type="match status" value="1"/>
</dbReference>
<dbReference type="PANTHER" id="PTHR43512">
    <property type="entry name" value="TRANSLATION FACTOR GUF1-RELATED"/>
    <property type="match status" value="1"/>
</dbReference>
<dbReference type="Pfam" id="PF00679">
    <property type="entry name" value="EFG_C"/>
    <property type="match status" value="1"/>
</dbReference>
<dbReference type="Pfam" id="PF00009">
    <property type="entry name" value="GTP_EFTU"/>
    <property type="match status" value="1"/>
</dbReference>
<dbReference type="Pfam" id="PF03144">
    <property type="entry name" value="GTP_EFTU_D2"/>
    <property type="match status" value="1"/>
</dbReference>
<dbReference type="Pfam" id="PF06421">
    <property type="entry name" value="LepA_C"/>
    <property type="match status" value="1"/>
</dbReference>
<dbReference type="PRINTS" id="PR00315">
    <property type="entry name" value="ELONGATNFCT"/>
</dbReference>
<dbReference type="SMART" id="SM00838">
    <property type="entry name" value="EFG_C"/>
    <property type="match status" value="1"/>
</dbReference>
<dbReference type="SUPFAM" id="SSF54980">
    <property type="entry name" value="EF-G C-terminal domain-like"/>
    <property type="match status" value="2"/>
</dbReference>
<dbReference type="SUPFAM" id="SSF52540">
    <property type="entry name" value="P-loop containing nucleoside triphosphate hydrolases"/>
    <property type="match status" value="1"/>
</dbReference>
<dbReference type="PROSITE" id="PS00301">
    <property type="entry name" value="G_TR_1"/>
    <property type="match status" value="1"/>
</dbReference>
<dbReference type="PROSITE" id="PS51722">
    <property type="entry name" value="G_TR_2"/>
    <property type="match status" value="1"/>
</dbReference>
<sequence>MTDVPAVRIRNFCIIAHIDHGKSTLADRLLQATGTVEDRKMKEQFLDNMDLERERGITIKLQAARMNYTAKDGQQYVLNLIDTPGHVDFSYEVSRSLVACEGALLVVDASQGVEAQTLANVYLALENNLEIIPVLNKIDLPGAEPERVIGEIEEIIGLDCSGAILASAKEGLGIDEILEAVVERIPPPPNTINERLRALIFDSYYDSYRGVIVYFRVMDGTVRKGDRIHLMASGKEFEIDELGVLSPTQKQVEELHAGEVGYLGAAIRAVADARVGDTITLSKAKAESPLPGYAEANPMVYCGMFPIDADQFEDLREALEKLELNDAALHYEPETSSAMGFGFRCGFLGLLHMEIVQERLEREYNLDLIITAPSVVYKVITLKGEELYIDNPSRLPSPNDRQRIEEPYVQVEMITPETYVGSLMELSQNRRGIFKDMKYLAQGRTTLTYELPLAEVVTDFFDQMKSRSRGYASMEYHLIGYRENPLVKLDIMINGDPVDSLAMIVHRDKAYNVGRAMAEKLKELIPRHQFKVPIQASIGSKVIASEHIPALRKDVLAKCYGGDISRKKKLLQKQAKGKKRMKSVGTVDVPQEAFMAVLRLDQS</sequence>
<gene>
    <name evidence="1" type="primary">lepA</name>
    <name type="ordered locus">Npun_F1552</name>
</gene>
<reference key="1">
    <citation type="journal article" date="2013" name="Plant Physiol.">
        <title>A Nostoc punctiforme Sugar Transporter Necessary to Establish a Cyanobacterium-Plant Symbiosis.</title>
        <authorList>
            <person name="Ekman M."/>
            <person name="Picossi S."/>
            <person name="Campbell E.L."/>
            <person name="Meeks J.C."/>
            <person name="Flores E."/>
        </authorList>
    </citation>
    <scope>NUCLEOTIDE SEQUENCE [LARGE SCALE GENOMIC DNA]</scope>
    <source>
        <strain>ATCC 29133 / PCC 73102</strain>
    </source>
</reference>
<evidence type="ECO:0000255" key="1">
    <source>
        <dbReference type="HAMAP-Rule" id="MF_00071"/>
    </source>
</evidence>